<accession>P14540</accession>
<accession>D6VXM7</accession>
<reference key="1">
    <citation type="journal article" date="1989" name="Eur. J. Biochem.">
        <title>Molecular cloning, primary structure and disruption of the structural gene of aldolase from Saccharomyces cerevisiae.</title>
        <authorList>
            <person name="Schwelberger H.G."/>
            <person name="Kohlwein S.D."/>
            <person name="Paltauf F."/>
        </authorList>
    </citation>
    <scope>NUCLEOTIDE SEQUENCE [GENOMIC DNA]</scope>
</reference>
<reference key="2">
    <citation type="journal article" date="1994" name="Nature">
        <title>Complete DNA sequence of yeast chromosome XI.</title>
        <authorList>
            <person name="Dujon B."/>
            <person name="Alexandraki D."/>
            <person name="Andre B."/>
            <person name="Ansorge W."/>
            <person name="Baladron V."/>
            <person name="Ballesta J.P.G."/>
            <person name="Banrevi A."/>
            <person name="Bolle P.-A."/>
            <person name="Bolotin-Fukuhara M."/>
            <person name="Bossier P."/>
            <person name="Bou G."/>
            <person name="Boyer J."/>
            <person name="Buitrago M.J."/>
            <person name="Cheret G."/>
            <person name="Colleaux L."/>
            <person name="Daignan-Fornier B."/>
            <person name="del Rey F."/>
            <person name="Dion C."/>
            <person name="Domdey H."/>
            <person name="Duesterhoeft A."/>
            <person name="Duesterhus S."/>
            <person name="Entian K.-D."/>
            <person name="Erfle H."/>
            <person name="Esteban P.F."/>
            <person name="Feldmann H."/>
            <person name="Fernandes L."/>
            <person name="Fobo G.M."/>
            <person name="Fritz C."/>
            <person name="Fukuhara H."/>
            <person name="Gabel C."/>
            <person name="Gaillon L."/>
            <person name="Garcia-Cantalejo J.M."/>
            <person name="Garcia-Ramirez J.J."/>
            <person name="Gent M.E."/>
            <person name="Ghazvini M."/>
            <person name="Goffeau A."/>
            <person name="Gonzalez A."/>
            <person name="Grothues D."/>
            <person name="Guerreiro P."/>
            <person name="Hegemann J.H."/>
            <person name="Hewitt N."/>
            <person name="Hilger F."/>
            <person name="Hollenberg C.P."/>
            <person name="Horaitis O."/>
            <person name="Indge K.J."/>
            <person name="Jacquier A."/>
            <person name="James C.M."/>
            <person name="Jauniaux J.-C."/>
            <person name="Jimenez A."/>
            <person name="Keuchel H."/>
            <person name="Kirchrath L."/>
            <person name="Kleine K."/>
            <person name="Koetter P."/>
            <person name="Legrain P."/>
            <person name="Liebl S."/>
            <person name="Louis E.J."/>
            <person name="Maia e Silva A."/>
            <person name="Marck C."/>
            <person name="Monnier A.-L."/>
            <person name="Moestl D."/>
            <person name="Mueller S."/>
            <person name="Obermaier B."/>
            <person name="Oliver S.G."/>
            <person name="Pallier C."/>
            <person name="Pascolo S."/>
            <person name="Pfeiffer F."/>
            <person name="Philippsen P."/>
            <person name="Planta R.J."/>
            <person name="Pohl F.M."/>
            <person name="Pohl T.M."/>
            <person name="Poehlmann R."/>
            <person name="Portetelle D."/>
            <person name="Purnelle B."/>
            <person name="Puzos V."/>
            <person name="Ramezani Rad M."/>
            <person name="Rasmussen S.W."/>
            <person name="Remacha M.A."/>
            <person name="Revuelta J.L."/>
            <person name="Richard G.-F."/>
            <person name="Rieger M."/>
            <person name="Rodrigues-Pousada C."/>
            <person name="Rose M."/>
            <person name="Rupp T."/>
            <person name="Santos M.A."/>
            <person name="Schwager C."/>
            <person name="Sensen C."/>
            <person name="Skala J."/>
            <person name="Soares H."/>
            <person name="Sor F."/>
            <person name="Stegemann J."/>
            <person name="Tettelin H."/>
            <person name="Thierry A."/>
            <person name="Tzermia M."/>
            <person name="Urrestarazu L.A."/>
            <person name="van Dyck L."/>
            <person name="van Vliet-Reedijk J.C."/>
            <person name="Valens M."/>
            <person name="Vandenbol M."/>
            <person name="Vilela C."/>
            <person name="Vissers S."/>
            <person name="von Wettstein D."/>
            <person name="Voss H."/>
            <person name="Wiemann S."/>
            <person name="Xu G."/>
            <person name="Zimmermann J."/>
            <person name="Haasemann M."/>
            <person name="Becker I."/>
            <person name="Mewes H.-W."/>
        </authorList>
    </citation>
    <scope>NUCLEOTIDE SEQUENCE [LARGE SCALE GENOMIC DNA]</scope>
    <source>
        <strain>ATCC 204508 / S288c</strain>
    </source>
</reference>
<reference key="3">
    <citation type="journal article" date="2014" name="G3 (Bethesda)">
        <title>The reference genome sequence of Saccharomyces cerevisiae: Then and now.</title>
        <authorList>
            <person name="Engel S.R."/>
            <person name="Dietrich F.S."/>
            <person name="Fisk D.G."/>
            <person name="Binkley G."/>
            <person name="Balakrishnan R."/>
            <person name="Costanzo M.C."/>
            <person name="Dwight S.S."/>
            <person name="Hitz B.C."/>
            <person name="Karra K."/>
            <person name="Nash R.S."/>
            <person name="Weng S."/>
            <person name="Wong E.D."/>
            <person name="Lloyd P."/>
            <person name="Skrzypek M.S."/>
            <person name="Miyasato S.R."/>
            <person name="Simison M."/>
            <person name="Cherry J.M."/>
        </authorList>
    </citation>
    <scope>GENOME REANNOTATION</scope>
    <source>
        <strain>ATCC 204508 / S288c</strain>
    </source>
</reference>
<reference key="4">
    <citation type="journal article" date="1994" name="Yeast">
        <title>Sequence of a 28.6 kb region of yeast chromosome XI includes the FBA1 and TOA2 genes, an open reading frame (ORF) similar to a translationally controlled tumour protein, one ORF containing motifs also found in plant storage proteins and 13 ORFs with weak or no homology to known proteins.</title>
        <authorList>
            <person name="Rasmussen S.W."/>
        </authorList>
    </citation>
    <scope>NUCLEOTIDE SEQUENCE [GENOMIC DNA]</scope>
    <source>
        <strain>ATCC 204508 / S288c</strain>
    </source>
</reference>
<reference key="5">
    <citation type="journal article" date="1990" name="Gene">
        <title>Cloning of Saccharomyces cerevisiae promoters using a probe vector based on phleomycin resistance.</title>
        <authorList>
            <person name="Gatignol A."/>
            <person name="Dassain M."/>
            <person name="Tiraby G."/>
        </authorList>
    </citation>
    <scope>NUCLEOTIDE SEQUENCE [GENOMIC DNA] OF 1-96</scope>
</reference>
<reference key="6">
    <citation type="thesis" date="1973" institute="University of Cambridge" country="United Kingdom">
        <authorList>
            <person name="Jack R.S."/>
        </authorList>
    </citation>
    <scope>PRELIMINARY PROTEIN SEQUENCE OF 2-40</scope>
</reference>
<reference key="7">
    <citation type="journal article" date="1994" name="Electrophoresis">
        <title>Protein identifications for a Saccharomyces cerevisiae protein database.</title>
        <authorList>
            <person name="Garrels J.I."/>
            <person name="Futcher B."/>
            <person name="Kobayashi R."/>
            <person name="Latter G.I."/>
            <person name="Schwender B."/>
            <person name="Volpe T."/>
            <person name="Warner J.R."/>
            <person name="McLaughlin C.S."/>
        </authorList>
    </citation>
    <scope>PROTEIN SEQUENCE OF 333-339</scope>
    <source>
        <strain>ATCC 204508 / S288c</strain>
    </source>
</reference>
<reference key="8">
    <citation type="journal article" date="1996" name="FEMS Microbiol. Lett.">
        <title>Protein expression during exponential growth in 0.7 M NaCl medium of Saccharomyces cerevisiae.</title>
        <authorList>
            <person name="Norbeck J."/>
            <person name="Blomberg A."/>
        </authorList>
    </citation>
    <scope>PROTEIN SEQUENCE OF 2-21</scope>
    <source>
        <strain>ATCC 38531 / Y41</strain>
    </source>
</reference>
<reference key="9">
    <citation type="journal article" date="2003" name="Nature">
        <title>Global analysis of protein expression in yeast.</title>
        <authorList>
            <person name="Ghaemmaghami S."/>
            <person name="Huh W.-K."/>
            <person name="Bower K."/>
            <person name="Howson R.W."/>
            <person name="Belle A."/>
            <person name="Dephoure N."/>
            <person name="O'Shea E.K."/>
            <person name="Weissman J.S."/>
        </authorList>
    </citation>
    <scope>LEVEL OF PROTEIN EXPRESSION [LARGE SCALE ANALYSIS]</scope>
</reference>
<reference key="10">
    <citation type="journal article" date="2007" name="J. Proteome Res.">
        <title>Large-scale phosphorylation analysis of alpha-factor-arrested Saccharomyces cerevisiae.</title>
        <authorList>
            <person name="Li X."/>
            <person name="Gerber S.A."/>
            <person name="Rudner A.D."/>
            <person name="Beausoleil S.A."/>
            <person name="Haas W."/>
            <person name="Villen J."/>
            <person name="Elias J.E."/>
            <person name="Gygi S.P."/>
        </authorList>
    </citation>
    <scope>PHOSPHORYLATION [LARGE SCALE ANALYSIS] AT THR-11; THR-150; TYR-310 AND SER-313</scope>
    <scope>IDENTIFICATION BY MASS SPECTROMETRY [LARGE SCALE ANALYSIS]</scope>
    <source>
        <strain>ADR376</strain>
    </source>
</reference>
<reference key="11">
    <citation type="journal article" date="2007" name="Proc. Natl. Acad. Sci. U.S.A.">
        <title>Analysis of phosphorylation sites on proteins from Saccharomyces cerevisiae by electron transfer dissociation (ETD) mass spectrometry.</title>
        <authorList>
            <person name="Chi A."/>
            <person name="Huttenhower C."/>
            <person name="Geer L.Y."/>
            <person name="Coon J.J."/>
            <person name="Syka J.E.P."/>
            <person name="Bai D.L."/>
            <person name="Shabanowitz J."/>
            <person name="Burke D.J."/>
            <person name="Troyanskaya O.G."/>
            <person name="Hunt D.F."/>
        </authorList>
    </citation>
    <scope>PHOSPHORYLATION [LARGE SCALE ANALYSIS] AT THR-11; SER-147; THR-179 AND SER-268</scope>
    <scope>IDENTIFICATION BY MASS SPECTROMETRY [LARGE SCALE ANALYSIS]</scope>
</reference>
<reference key="12">
    <citation type="journal article" date="2008" name="Mol. Cell. Proteomics">
        <title>A multidimensional chromatography technology for in-depth phosphoproteome analysis.</title>
        <authorList>
            <person name="Albuquerque C.P."/>
            <person name="Smolka M.B."/>
            <person name="Payne S.H."/>
            <person name="Bafna V."/>
            <person name="Eng J."/>
            <person name="Zhou H."/>
        </authorList>
    </citation>
    <scope>PHOSPHORYLATION [LARGE SCALE ANALYSIS] AT SER-76; SER-96; SER-147; THR-150; THR-290 AND SER-313</scope>
    <scope>IDENTIFICATION BY MASS SPECTROMETRY [LARGE SCALE ANALYSIS]</scope>
</reference>
<reference key="13">
    <citation type="journal article" date="2009" name="Science">
        <title>Global analysis of Cdk1 substrate phosphorylation sites provides insights into evolution.</title>
        <authorList>
            <person name="Holt L.J."/>
            <person name="Tuch B.B."/>
            <person name="Villen J."/>
            <person name="Johnson A.D."/>
            <person name="Gygi S.P."/>
            <person name="Morgan D.O."/>
        </authorList>
    </citation>
    <scope>PHOSPHORYLATION [LARGE SCALE ANALYSIS] AT SER-56; SER-63; SER-76; SER-83; THR-290 AND SER-313</scope>
    <scope>IDENTIFICATION BY MASS SPECTROMETRY [LARGE SCALE ANALYSIS]</scope>
</reference>
<reference key="14">
    <citation type="journal article" date="2012" name="Proc. Natl. Acad. Sci. U.S.A.">
        <title>N-terminal acetylome analyses and functional insights of the N-terminal acetyltransferase NatB.</title>
        <authorList>
            <person name="Van Damme P."/>
            <person name="Lasa M."/>
            <person name="Polevoda B."/>
            <person name="Gazquez C."/>
            <person name="Elosegui-Artola A."/>
            <person name="Kim D.S."/>
            <person name="De Juan-Pardo E."/>
            <person name="Demeyer K."/>
            <person name="Hole K."/>
            <person name="Larrea E."/>
            <person name="Timmerman E."/>
            <person name="Prieto J."/>
            <person name="Arnesen T."/>
            <person name="Sherman F."/>
            <person name="Gevaert K."/>
            <person name="Aldabe R."/>
        </authorList>
    </citation>
    <scope>IDENTIFICATION BY MASS SPECTROMETRY [LARGE SCALE ANALYSIS]</scope>
</reference>
<reference key="15">
    <citation type="journal article" date="2012" name="Proteomics">
        <title>Sites of ubiquitin attachment in Saccharomyces cerevisiae.</title>
        <authorList>
            <person name="Starita L.M."/>
            <person name="Lo R.S."/>
            <person name="Eng J.K."/>
            <person name="von Haller P.D."/>
            <person name="Fields S."/>
        </authorList>
    </citation>
    <scope>UBIQUITINATION [LARGE SCALE ANALYSIS] AT LYS-27; LYS-73; LYS-85 AND LYS-308</scope>
    <scope>IDENTIFICATION BY MASS SPECTROMETRY [LARGE SCALE ANALYSIS]</scope>
</reference>
<dbReference type="EC" id="4.1.2.13" evidence="3"/>
<dbReference type="EMBL" id="X15003">
    <property type="protein sequence ID" value="CAA33111.1"/>
    <property type="molecule type" value="Genomic_DNA"/>
</dbReference>
<dbReference type="EMBL" id="Z28060">
    <property type="protein sequence ID" value="CAA81897.1"/>
    <property type="molecule type" value="Genomic_DNA"/>
</dbReference>
<dbReference type="EMBL" id="X75781">
    <property type="protein sequence ID" value="CAA53412.1"/>
    <property type="molecule type" value="Genomic_DNA"/>
</dbReference>
<dbReference type="EMBL" id="M32026">
    <property type="status" value="NOT_ANNOTATED_CDS"/>
    <property type="molecule type" value="Genomic_DNA"/>
</dbReference>
<dbReference type="EMBL" id="BK006944">
    <property type="protein sequence ID" value="DAA09097.1"/>
    <property type="molecule type" value="Genomic_DNA"/>
</dbReference>
<dbReference type="PIR" id="S07855">
    <property type="entry name" value="ADBY2"/>
</dbReference>
<dbReference type="RefSeq" id="NP_012863.1">
    <property type="nucleotide sequence ID" value="NM_001179626.1"/>
</dbReference>
<dbReference type="SMR" id="P14540"/>
<dbReference type="BioGRID" id="34073">
    <property type="interactions" value="213"/>
</dbReference>
<dbReference type="DIP" id="DIP-4702N"/>
<dbReference type="FunCoup" id="P14540">
    <property type="interactions" value="986"/>
</dbReference>
<dbReference type="IntAct" id="P14540">
    <property type="interactions" value="123"/>
</dbReference>
<dbReference type="MINT" id="P14540"/>
<dbReference type="STRING" id="4932.YKL060C"/>
<dbReference type="MoonDB" id="P14540">
    <property type="type" value="Curated"/>
</dbReference>
<dbReference type="MoonProt" id="P14540"/>
<dbReference type="CarbonylDB" id="P14540"/>
<dbReference type="iPTMnet" id="P14540"/>
<dbReference type="PaxDb" id="4932-YKL060C"/>
<dbReference type="PeptideAtlas" id="P14540"/>
<dbReference type="TopDownProteomics" id="P14540"/>
<dbReference type="EnsemblFungi" id="YKL060C_mRNA">
    <property type="protein sequence ID" value="YKL060C"/>
    <property type="gene ID" value="YKL060C"/>
</dbReference>
<dbReference type="GeneID" id="853805"/>
<dbReference type="KEGG" id="sce:YKL060C"/>
<dbReference type="AGR" id="SGD:S000001543"/>
<dbReference type="SGD" id="S000001543">
    <property type="gene designation" value="FBA1"/>
</dbReference>
<dbReference type="VEuPathDB" id="FungiDB:YKL060C"/>
<dbReference type="eggNOG" id="KOG4153">
    <property type="taxonomic scope" value="Eukaryota"/>
</dbReference>
<dbReference type="HOGENOM" id="CLU_036923_1_0_1"/>
<dbReference type="InParanoid" id="P14540"/>
<dbReference type="OMA" id="PRTWGKL"/>
<dbReference type="OrthoDB" id="35652at2759"/>
<dbReference type="BioCyc" id="YEAST:YKL060C-MONOMER"/>
<dbReference type="BRENDA" id="4.1.2.13">
    <property type="organism ID" value="984"/>
</dbReference>
<dbReference type="SABIO-RK" id="P14540"/>
<dbReference type="UniPathway" id="UPA00109">
    <property type="reaction ID" value="UER00183"/>
</dbReference>
<dbReference type="BioGRID-ORCS" id="853805">
    <property type="hits" value="0 hits in 10 CRISPR screens"/>
</dbReference>
<dbReference type="CD-CODE" id="0F56F502">
    <property type="entry name" value="G-body"/>
</dbReference>
<dbReference type="CD-CODE" id="E03F929F">
    <property type="entry name" value="Stress granule"/>
</dbReference>
<dbReference type="PRO" id="PR:P14540"/>
<dbReference type="Proteomes" id="UP000002311">
    <property type="component" value="Chromosome XI"/>
</dbReference>
<dbReference type="RNAct" id="P14540">
    <property type="molecule type" value="protein"/>
</dbReference>
<dbReference type="GO" id="GO:0005737">
    <property type="term" value="C:cytoplasm"/>
    <property type="evidence" value="ECO:0007005"/>
    <property type="project" value="SGD"/>
</dbReference>
<dbReference type="GO" id="GO:0005829">
    <property type="term" value="C:cytosol"/>
    <property type="evidence" value="ECO:0000314"/>
    <property type="project" value="SGD"/>
</dbReference>
<dbReference type="GO" id="GO:0005739">
    <property type="term" value="C:mitochondrion"/>
    <property type="evidence" value="ECO:0000314"/>
    <property type="project" value="SGD"/>
</dbReference>
<dbReference type="GO" id="GO:0004332">
    <property type="term" value="F:fructose-bisphosphate aldolase activity"/>
    <property type="evidence" value="ECO:0000314"/>
    <property type="project" value="SGD"/>
</dbReference>
<dbReference type="GO" id="GO:1904408">
    <property type="term" value="F:melatonin binding"/>
    <property type="evidence" value="ECO:0000314"/>
    <property type="project" value="SGD"/>
</dbReference>
<dbReference type="GO" id="GO:0008270">
    <property type="term" value="F:zinc ion binding"/>
    <property type="evidence" value="ECO:0000318"/>
    <property type="project" value="GO_Central"/>
</dbReference>
<dbReference type="GO" id="GO:0061621">
    <property type="term" value="P:canonical glycolysis"/>
    <property type="evidence" value="ECO:0000315"/>
    <property type="project" value="FlyBase"/>
</dbReference>
<dbReference type="GO" id="GO:0006094">
    <property type="term" value="P:gluconeogenesis"/>
    <property type="evidence" value="ECO:0000315"/>
    <property type="project" value="SGD"/>
</dbReference>
<dbReference type="GO" id="GO:0006096">
    <property type="term" value="P:glycolytic process"/>
    <property type="evidence" value="ECO:0000315"/>
    <property type="project" value="SGD"/>
</dbReference>
<dbReference type="CDD" id="cd00946">
    <property type="entry name" value="FBP_aldolase_IIA"/>
    <property type="match status" value="1"/>
</dbReference>
<dbReference type="FunFam" id="3.20.20.70:FF:000013">
    <property type="entry name" value="Class II fructose-bisphosphate aldolase"/>
    <property type="match status" value="1"/>
</dbReference>
<dbReference type="Gene3D" id="3.20.20.70">
    <property type="entry name" value="Aldolase class I"/>
    <property type="match status" value="1"/>
</dbReference>
<dbReference type="InterPro" id="IPR013785">
    <property type="entry name" value="Aldolase_TIM"/>
</dbReference>
<dbReference type="InterPro" id="IPR000771">
    <property type="entry name" value="FBA_II"/>
</dbReference>
<dbReference type="InterPro" id="IPR006411">
    <property type="entry name" value="Fruct_bisP_bact"/>
</dbReference>
<dbReference type="NCBIfam" id="TIGR00167">
    <property type="entry name" value="cbbA"/>
    <property type="match status" value="1"/>
</dbReference>
<dbReference type="NCBIfam" id="TIGR01520">
    <property type="entry name" value="FruBisAldo_II_A"/>
    <property type="match status" value="1"/>
</dbReference>
<dbReference type="NCBIfam" id="NF006628">
    <property type="entry name" value="PRK09197.1"/>
    <property type="match status" value="1"/>
</dbReference>
<dbReference type="PANTHER" id="PTHR30559:SF0">
    <property type="entry name" value="FRUCTOSE-BISPHOSPHATE ALDOLASE"/>
    <property type="match status" value="1"/>
</dbReference>
<dbReference type="PANTHER" id="PTHR30559">
    <property type="entry name" value="FRUCTOSE-BISPHOSPHATE ALDOLASE CLASS 2"/>
    <property type="match status" value="1"/>
</dbReference>
<dbReference type="Pfam" id="PF01116">
    <property type="entry name" value="F_bP_aldolase"/>
    <property type="match status" value="1"/>
</dbReference>
<dbReference type="PIRSF" id="PIRSF001359">
    <property type="entry name" value="F_bP_aldolase_II"/>
    <property type="match status" value="1"/>
</dbReference>
<dbReference type="SUPFAM" id="SSF51569">
    <property type="entry name" value="Aldolase"/>
    <property type="match status" value="1"/>
</dbReference>
<dbReference type="PROSITE" id="PS00602">
    <property type="entry name" value="ALDOLASE_CLASS_II_1"/>
    <property type="match status" value="1"/>
</dbReference>
<dbReference type="PROSITE" id="PS00806">
    <property type="entry name" value="ALDOLASE_CLASS_II_2"/>
    <property type="match status" value="1"/>
</dbReference>
<keyword id="KW-0903">Direct protein sequencing</keyword>
<keyword id="KW-0324">Glycolysis</keyword>
<keyword id="KW-1017">Isopeptide bond</keyword>
<keyword id="KW-0456">Lyase</keyword>
<keyword id="KW-0479">Metal-binding</keyword>
<keyword id="KW-0597">Phosphoprotein</keyword>
<keyword id="KW-1185">Reference proteome</keyword>
<keyword id="KW-0832">Ubl conjugation</keyword>
<keyword id="KW-0862">Zinc</keyword>
<feature type="initiator methionine" description="Removed" evidence="4">
    <location>
        <position position="1"/>
    </location>
</feature>
<feature type="chain" id="PRO_0000178762" description="Fructose-bisphosphate aldolase">
    <location>
        <begin position="2"/>
        <end position="359"/>
    </location>
</feature>
<feature type="active site" description="Proton donor" evidence="1">
    <location>
        <position position="110"/>
    </location>
</feature>
<feature type="binding site" evidence="1">
    <location>
        <position position="63"/>
    </location>
    <ligand>
        <name>D-glyceraldehyde 3-phosphate</name>
        <dbReference type="ChEBI" id="CHEBI:59776"/>
    </ligand>
</feature>
<feature type="binding site" evidence="1">
    <location>
        <position position="111"/>
    </location>
    <ligand>
        <name>Zn(2+)</name>
        <dbReference type="ChEBI" id="CHEBI:29105"/>
        <label>1</label>
        <note>catalytic</note>
    </ligand>
</feature>
<feature type="binding site" evidence="1">
    <location>
        <position position="145"/>
    </location>
    <ligand>
        <name>Zn(2+)</name>
        <dbReference type="ChEBI" id="CHEBI:29105"/>
        <label>2</label>
    </ligand>
</feature>
<feature type="binding site" evidence="1">
    <location>
        <position position="175"/>
    </location>
    <ligand>
        <name>Zn(2+)</name>
        <dbReference type="ChEBI" id="CHEBI:29105"/>
        <label>2</label>
    </ligand>
</feature>
<feature type="binding site" evidence="1">
    <location>
        <position position="227"/>
    </location>
    <ligand>
        <name>Zn(2+)</name>
        <dbReference type="ChEBI" id="CHEBI:29105"/>
        <label>1</label>
        <note>catalytic</note>
    </ligand>
</feature>
<feature type="binding site" evidence="1">
    <location>
        <position position="228"/>
    </location>
    <ligand>
        <name>dihydroxyacetone phosphate</name>
        <dbReference type="ChEBI" id="CHEBI:57642"/>
    </ligand>
</feature>
<feature type="binding site" evidence="1">
    <location>
        <position position="265"/>
    </location>
    <ligand>
        <name>Zn(2+)</name>
        <dbReference type="ChEBI" id="CHEBI:29105"/>
        <label>1</label>
        <note>catalytic</note>
    </ligand>
</feature>
<feature type="binding site" evidence="1">
    <location>
        <begin position="266"/>
        <end position="268"/>
    </location>
    <ligand>
        <name>dihydroxyacetone phosphate</name>
        <dbReference type="ChEBI" id="CHEBI:57642"/>
    </ligand>
</feature>
<feature type="binding site" evidence="1">
    <location>
        <begin position="287"/>
        <end position="290"/>
    </location>
    <ligand>
        <name>dihydroxyacetone phosphate</name>
        <dbReference type="ChEBI" id="CHEBI:57642"/>
    </ligand>
</feature>
<feature type="modified residue" description="Phosphothreonine" evidence="6 7">
    <location>
        <position position="11"/>
    </location>
</feature>
<feature type="modified residue" description="Phosphoserine" evidence="9">
    <location>
        <position position="56"/>
    </location>
</feature>
<feature type="modified residue" description="Phosphoserine" evidence="9">
    <location>
        <position position="63"/>
    </location>
</feature>
<feature type="modified residue" description="Phosphoserine" evidence="8 9">
    <location>
        <position position="76"/>
    </location>
</feature>
<feature type="modified residue" description="Phosphoserine" evidence="9">
    <location>
        <position position="83"/>
    </location>
</feature>
<feature type="modified residue" description="Phosphoserine" evidence="8">
    <location>
        <position position="96"/>
    </location>
</feature>
<feature type="modified residue" description="Phosphoserine" evidence="6 8">
    <location>
        <position position="147"/>
    </location>
</feature>
<feature type="modified residue" description="Phosphothreonine" evidence="7 8">
    <location>
        <position position="150"/>
    </location>
</feature>
<feature type="modified residue" description="Phosphothreonine" evidence="6">
    <location>
        <position position="179"/>
    </location>
</feature>
<feature type="modified residue" description="Phosphoserine" evidence="6">
    <location>
        <position position="268"/>
    </location>
</feature>
<feature type="modified residue" description="Phosphothreonine" evidence="8 9">
    <location>
        <position position="290"/>
    </location>
</feature>
<feature type="modified residue" description="Phosphotyrosine" evidence="7">
    <location>
        <position position="310"/>
    </location>
</feature>
<feature type="modified residue" description="Phosphoserine" evidence="7 8 9">
    <location>
        <position position="313"/>
    </location>
</feature>
<feature type="cross-link" description="Glycyl lysine isopeptide (Lys-Gly) (interchain with G-Cter in ubiquitin)" evidence="10">
    <location>
        <position position="27"/>
    </location>
</feature>
<feature type="cross-link" description="Glycyl lysine isopeptide (Lys-Gly) (interchain with G-Cter in ubiquitin)" evidence="10">
    <location>
        <position position="73"/>
    </location>
</feature>
<feature type="cross-link" description="Glycyl lysine isopeptide (Lys-Gly) (interchain with G-Cter in ubiquitin)" evidence="10">
    <location>
        <position position="85"/>
    </location>
</feature>
<feature type="cross-link" description="Glycyl lysine isopeptide (Lys-Gly) (interchain with G-Cter in ubiquitin)" evidence="10">
    <location>
        <position position="308"/>
    </location>
</feature>
<proteinExistence type="evidence at protein level"/>
<evidence type="ECO:0000250" key="1"/>
<evidence type="ECO:0000269" key="2">
    <source>
    </source>
</evidence>
<evidence type="ECO:0000269" key="3">
    <source>
    </source>
</evidence>
<evidence type="ECO:0000269" key="4">
    <source>
    </source>
</evidence>
<evidence type="ECO:0000305" key="5"/>
<evidence type="ECO:0007744" key="6">
    <source>
    </source>
</evidence>
<evidence type="ECO:0007744" key="7">
    <source>
    </source>
</evidence>
<evidence type="ECO:0007744" key="8">
    <source>
    </source>
</evidence>
<evidence type="ECO:0007744" key="9">
    <source>
    </source>
</evidence>
<evidence type="ECO:0007744" key="10">
    <source>
    </source>
</evidence>
<protein>
    <recommendedName>
        <fullName>Fructose-bisphosphate aldolase</fullName>
        <shortName>FBP aldolase</shortName>
        <shortName>FBPA</shortName>
        <ecNumber evidence="3">4.1.2.13</ecNumber>
    </recommendedName>
    <alternativeName>
        <fullName>Fructose-1,6-bisphosphate aldolase</fullName>
    </alternativeName>
</protein>
<name>ALF_YEAST</name>
<organism>
    <name type="scientific">Saccharomyces cerevisiae (strain ATCC 204508 / S288c)</name>
    <name type="common">Baker's yeast</name>
    <dbReference type="NCBI Taxonomy" id="559292"/>
    <lineage>
        <taxon>Eukaryota</taxon>
        <taxon>Fungi</taxon>
        <taxon>Dikarya</taxon>
        <taxon>Ascomycota</taxon>
        <taxon>Saccharomycotina</taxon>
        <taxon>Saccharomycetes</taxon>
        <taxon>Saccharomycetales</taxon>
        <taxon>Saccharomycetaceae</taxon>
        <taxon>Saccharomyces</taxon>
    </lineage>
</organism>
<gene>
    <name type="primary">FBA1</name>
    <name type="ordered locus">YKL060C</name>
    <name type="ORF">YKL320</name>
</gene>
<comment type="function">
    <text evidence="1">Catalyzes the aldol condensation of dihydroxyacetone phosphate (DHAP or glycerone-phosphate) with glyceraldehyde 3-phosphate (G3P) to form fructose 1,6-bisphosphate (FBP) in gluconeogenesis and the reverse reaction in glycolysis.</text>
</comment>
<comment type="catalytic activity">
    <reaction evidence="3">
        <text>beta-D-fructose 1,6-bisphosphate = D-glyceraldehyde 3-phosphate + dihydroxyacetone phosphate</text>
        <dbReference type="Rhea" id="RHEA:14729"/>
        <dbReference type="ChEBI" id="CHEBI:32966"/>
        <dbReference type="ChEBI" id="CHEBI:57642"/>
        <dbReference type="ChEBI" id="CHEBI:59776"/>
        <dbReference type="EC" id="4.1.2.13"/>
    </reaction>
</comment>
<comment type="cofactor">
    <cofactor evidence="1">
        <name>Zn(2+)</name>
        <dbReference type="ChEBI" id="CHEBI:29105"/>
    </cofactor>
    <text evidence="1">Binds 2 Zn(2+) ions per subunit. One is catalytic and the other provides a structural contribution.</text>
</comment>
<comment type="pathway">
    <text>Carbohydrate degradation; glycolysis; D-glyceraldehyde 3-phosphate and glycerone phosphate from D-glucose: step 4/4.</text>
</comment>
<comment type="subunit">
    <text>Homodimer.</text>
</comment>
<comment type="miscellaneous">
    <text evidence="2">Present with 1020000 molecules/cell in log phase SD medium.</text>
</comment>
<comment type="similarity">
    <text evidence="5">Belongs to the class II fructose-bisphosphate aldolase family.</text>
</comment>
<sequence length="359" mass="39621">MGVEQILKRKTGVIVGEDVHNLFTYAKEHKFAIPAINVTSSSTAVAALEAARDSKSPIILQTSNGGAAYFAGKGISNEGQNASIKGAIAAAHYIRSIAPAYGIPVVLHSDHCAKKLLPWFDGMLEADEAYFKEHGEPLFSSHMLDLSEETDEENISTCVKYFKRMAAMDQWLEMEIGITGGEEDGVNNENADKEDLYTKPEQVYNVYKALHPISPNFSIAAAFGNCHGLYAGDIALRPEILAEHQKYTREQVGCKEEKPLFLVFHGGSGSTVQEFHTGIDNGVVKVNLDTDCQYAYLTGIRDYVLNKKDYIMSPVGNPEGPEKPNKKFFDPRVWVREGEKTMGAKITKSLETFRTTNTL</sequence>